<dbReference type="SMR" id="P24776"/>
<dbReference type="GO" id="GO:0005576">
    <property type="term" value="C:extracellular region"/>
    <property type="evidence" value="ECO:0007669"/>
    <property type="project" value="UniProtKB-SubCell"/>
</dbReference>
<dbReference type="GO" id="GO:0090729">
    <property type="term" value="F:toxin activity"/>
    <property type="evidence" value="ECO:0007669"/>
    <property type="project" value="UniProtKB-KW"/>
</dbReference>
<dbReference type="GO" id="GO:0031640">
    <property type="term" value="P:killing of cells of another organism"/>
    <property type="evidence" value="ECO:0007669"/>
    <property type="project" value="UniProtKB-KW"/>
</dbReference>
<dbReference type="GO" id="GO:0008217">
    <property type="term" value="P:regulation of blood pressure"/>
    <property type="evidence" value="ECO:0007669"/>
    <property type="project" value="UniProtKB-KW"/>
</dbReference>
<dbReference type="CDD" id="cd00206">
    <property type="entry name" value="TFP_snake_toxin"/>
    <property type="match status" value="1"/>
</dbReference>
<dbReference type="FunFam" id="2.10.60.10:FF:000024">
    <property type="entry name" value="Cytotoxin 1"/>
    <property type="match status" value="1"/>
</dbReference>
<dbReference type="Gene3D" id="2.10.60.10">
    <property type="entry name" value="CD59"/>
    <property type="match status" value="1"/>
</dbReference>
<dbReference type="InterPro" id="IPR003572">
    <property type="entry name" value="Cytotoxin_Cobra"/>
</dbReference>
<dbReference type="InterPro" id="IPR003571">
    <property type="entry name" value="Snake_3FTx"/>
</dbReference>
<dbReference type="InterPro" id="IPR045860">
    <property type="entry name" value="Snake_toxin-like_sf"/>
</dbReference>
<dbReference type="InterPro" id="IPR018354">
    <property type="entry name" value="Snake_toxin_con_site"/>
</dbReference>
<dbReference type="InterPro" id="IPR054131">
    <property type="entry name" value="Toxin_cobra-type"/>
</dbReference>
<dbReference type="Pfam" id="PF21947">
    <property type="entry name" value="Toxin_cobra-type"/>
    <property type="match status" value="1"/>
</dbReference>
<dbReference type="PRINTS" id="PR00282">
    <property type="entry name" value="CYTOTOXIN"/>
</dbReference>
<dbReference type="SUPFAM" id="SSF57302">
    <property type="entry name" value="Snake toxin-like"/>
    <property type="match status" value="1"/>
</dbReference>
<dbReference type="PROSITE" id="PS00272">
    <property type="entry name" value="SNAKE_TOXIN"/>
    <property type="match status" value="1"/>
</dbReference>
<organism>
    <name type="scientific">Hemachatus haemachatus</name>
    <name type="common">Rinkhals</name>
    <name type="synonym">Sepedon haemachatus</name>
    <dbReference type="NCBI Taxonomy" id="8626"/>
    <lineage>
        <taxon>Eukaryota</taxon>
        <taxon>Metazoa</taxon>
        <taxon>Chordata</taxon>
        <taxon>Craniata</taxon>
        <taxon>Vertebrata</taxon>
        <taxon>Euteleostomi</taxon>
        <taxon>Lepidosauria</taxon>
        <taxon>Squamata</taxon>
        <taxon>Bifurcata</taxon>
        <taxon>Unidentata</taxon>
        <taxon>Episquamata</taxon>
        <taxon>Toxicofera</taxon>
        <taxon>Serpentes</taxon>
        <taxon>Colubroidea</taxon>
        <taxon>Elapidae</taxon>
        <taxon>Elapinae</taxon>
        <taxon>Hemachatus</taxon>
    </lineage>
</organism>
<evidence type="ECO:0000250" key="1">
    <source>
        <dbReference type="UniProtKB" id="P60301"/>
    </source>
</evidence>
<evidence type="ECO:0000269" key="2">
    <source>
    </source>
</evidence>
<evidence type="ECO:0000303" key="3">
    <source>
    </source>
</evidence>
<evidence type="ECO:0000305" key="4"/>
<name>3SB2_HEMHA</name>
<protein>
    <recommendedName>
        <fullName>Cytotoxin 2</fullName>
    </recommendedName>
    <alternativeName>
        <fullName evidence="3">Toxin 12A</fullName>
    </alternativeName>
</protein>
<keyword id="KW-0123">Cardiotoxin</keyword>
<keyword id="KW-0204">Cytolysis</keyword>
<keyword id="KW-0903">Direct protein sequencing</keyword>
<keyword id="KW-1015">Disulfide bond</keyword>
<keyword id="KW-0354">Hemolysis</keyword>
<keyword id="KW-0382">Hypotensive agent</keyword>
<keyword id="KW-0964">Secreted</keyword>
<keyword id="KW-0800">Toxin</keyword>
<feature type="chain" id="PRO_0000093477" description="Cytotoxin 2" evidence="2">
    <location>
        <begin position="1"/>
        <end position="61"/>
    </location>
</feature>
<feature type="disulfide bond" evidence="1">
    <location>
        <begin position="3"/>
        <end position="22"/>
    </location>
</feature>
<feature type="disulfide bond" evidence="1">
    <location>
        <begin position="15"/>
        <end position="39"/>
    </location>
</feature>
<feature type="disulfide bond" evidence="1">
    <location>
        <begin position="43"/>
        <end position="54"/>
    </location>
</feature>
<feature type="disulfide bond" evidence="1">
    <location>
        <begin position="55"/>
        <end position="60"/>
    </location>
</feature>
<reference key="1">
    <citation type="journal article" date="1977" name="Eur. J. Biochem.">
        <title>Snake venom toxins. The amino-acid sequences of three toxins (9B, 11 and 12A) from Hemachatus haemachatus (Ringhals) venom.</title>
        <authorList>
            <person name="Joubert F.J."/>
        </authorList>
    </citation>
    <scope>PROTEIN SEQUENCE</scope>
    <scope>TOXIC DOSE</scope>
    <scope>SUBCELLULAR LOCATION</scope>
    <source>
        <tissue>Venom</tissue>
    </source>
</reference>
<comment type="function">
    <text evidence="3">This protein lyses red blood cells, has cytotoxic activity and induces hypotension, but is not neurotoxic. In addition, it induces direct paralysis of the muscle fiber.</text>
</comment>
<comment type="subcellular location">
    <subcellularLocation>
        <location evidence="2">Secreted</location>
    </subcellularLocation>
</comment>
<comment type="tissue specificity">
    <text evidence="4">Expressed by the venom gland.</text>
</comment>
<comment type="toxic dose">
    <text evidence="2">LD(50) is 3.8 mg/kg by intravenous injection into mice.</text>
</comment>
<comment type="miscellaneous">
    <text evidence="4">Is classified as a P-type cytotoxin, since a proline residue stands at position 31 (Pro-31 in standard classification).</text>
</comment>
<comment type="similarity">
    <text evidence="4">Belongs to the three-finger toxin family. Short-chain subfamily. Type IB cytotoxin sub-subfamily.</text>
</comment>
<sequence length="61" mass="6800">LKCHNKVVPFLSKTCPEGKNLCYKMTLKKVPKIPIKRGCTDACPKSSLLVNVMCCKTDKCN</sequence>
<proteinExistence type="evidence at protein level"/>
<accession>P24776</accession>